<sequence>MCSTKKPIKLDLCASVKLTPFKPMRPPKPMQCWIHPRRANCKVTRPRNNYSDPDNENDMLHMTVLNSVFLNEHAKLYYRHLLRNDQAEARKTILNADSVYECMLIRPIRTEHFRSVDEAGEHNMSVLKIIIDAVIKYIGKLADDEYILIADRMYVDLIYSEFRAIILPQSAYIIKGDYAESDSESGQSVDVCNELEYPWKLITANNCIVSTDESRQSQYIYRTFLLYNTVLTAILKQNNPFDVIAENTSISIIVRNLGSCPNNKDRVKCCDLNYGGVPPGHVMCPPREITKKFFHYAKWVRNPNKYKRYSELIARQSETGGGSASLRENVNNQLHARDVSQLHLLDWENFMGEFSSYFGLHAHNV</sequence>
<accession>P41458</accession>
<feature type="chain" id="PRO_0000132987" description="Protein AC54">
    <location>
        <begin position="1"/>
        <end position="365"/>
    </location>
</feature>
<protein>
    <recommendedName>
        <fullName>Protein AC54</fullName>
    </recommendedName>
</protein>
<organismHost>
    <name type="scientific">Lepidoptera</name>
    <name type="common">butterflies and moths</name>
    <dbReference type="NCBI Taxonomy" id="7088"/>
</organismHost>
<evidence type="ECO:0000269" key="1">
    <source>
    </source>
</evidence>
<evidence type="ECO:0000269" key="2">
    <source>
    </source>
</evidence>
<evidence type="ECO:0000269" key="3">
    <source>
    </source>
</evidence>
<evidence type="ECO:0000269" key="4">
    <source>
    </source>
</evidence>
<gene>
    <name type="primary">AC54</name>
    <name type="synonym">VP1054</name>
    <name type="ORF">ORF54</name>
</gene>
<reference key="1">
    <citation type="journal article" date="1994" name="Virology">
        <title>The complete DNA sequence of Autographa californica nuclear polyhedrosis virus.</title>
        <authorList>
            <person name="Ayres M.D."/>
            <person name="Howard S.C."/>
            <person name="Kuzio J."/>
            <person name="Lopez-Ferber M."/>
            <person name="Possee R.D."/>
        </authorList>
    </citation>
    <scope>NUCLEOTIDE SEQUENCE [LARGE SCALE GENOMIC DNA]</scope>
    <source>
        <strain>C6</strain>
    </source>
</reference>
<reference key="2">
    <citation type="journal article" date="1997" name="J. Virol.">
        <title>Identification and characterization of a baculovirus structural protein, VP1054, required for nucleocapsid formation.</title>
        <authorList>
            <person name="Olszewski J."/>
            <person name="Miller L.K."/>
        </authorList>
    </citation>
    <scope>FUNCTION</scope>
    <scope>SUBCELLULAR LOCATION</scope>
</reference>
<reference key="3">
    <citation type="journal article" date="2008" name="J. Virol.">
        <title>Autographa californica multiple nucleopolyhedrovirus 38K is a novel nucleocapsid protein that interacts with VP1054, VP39, VP80, and itself.</title>
        <authorList>
            <person name="Wu W."/>
            <person name="Liang H."/>
            <person name="Kan J."/>
            <person name="Liu C."/>
            <person name="Yuan M."/>
            <person name="Liang C."/>
            <person name="Yang K."/>
            <person name="Pang Y."/>
        </authorList>
    </citation>
    <scope>INTERACTION WITH 38K</scope>
</reference>
<reference key="4">
    <citation type="journal article" date="2013" name="J. Virol.">
        <title>Baculovirus VP1054 is an acquired cellular PURalpha, a nucleic acid-binding protein specific for GGN repeats.</title>
        <authorList>
            <person name="Marek M."/>
            <person name="Romier C."/>
            <person name="Galibert L."/>
            <person name="Merten O.W."/>
            <person name="van Oers M.M."/>
        </authorList>
    </citation>
    <scope>FUNCTION</scope>
    <scope>SUBCELLULAR LOCATION</scope>
</reference>
<reference key="5">
    <citation type="journal article" date="2016" name="J. Virol.">
        <title>The Autographa californica Multiple Nucleopolyhedrovirus ac54 gene is crucial for localization of the major capsid protein VP39 at the site of nucleocapsid assembly.</title>
        <authorList>
            <person name="Guan Z."/>
            <person name="Zhong L."/>
            <person name="Li C."/>
            <person name="Wu W."/>
            <person name="Yuan M."/>
            <person name="Yang K."/>
        </authorList>
    </citation>
    <scope>FUNCTION</scope>
    <scope>INTERACTION WITH C42 AND VP80</scope>
</reference>
<name>AC54_NPVAC</name>
<dbReference type="EMBL" id="L22858">
    <property type="protein sequence ID" value="AAA66684.1"/>
    <property type="molecule type" value="Genomic_DNA"/>
</dbReference>
<dbReference type="PIR" id="G72856">
    <property type="entry name" value="G72856"/>
</dbReference>
<dbReference type="KEGG" id="vg:1403887"/>
<dbReference type="OrthoDB" id="6189at10239"/>
<dbReference type="Proteomes" id="UP000008292">
    <property type="component" value="Segment"/>
</dbReference>
<dbReference type="GO" id="GO:0044423">
    <property type="term" value="C:virion component"/>
    <property type="evidence" value="ECO:0000314"/>
    <property type="project" value="UniProtKB"/>
</dbReference>
<dbReference type="InterPro" id="IPR008416">
    <property type="entry name" value="Baculo_VP1054"/>
</dbReference>
<dbReference type="Pfam" id="PF05789">
    <property type="entry name" value="Baculo_VP1054"/>
    <property type="match status" value="1"/>
</dbReference>
<proteinExistence type="evidence at protein level"/>
<organism>
    <name type="scientific">Autographa californica nuclear polyhedrosis virus</name>
    <name type="common">AcMNPV</name>
    <dbReference type="NCBI Taxonomy" id="46015"/>
    <lineage>
        <taxon>Viruses</taxon>
        <taxon>Viruses incertae sedis</taxon>
        <taxon>Naldaviricetes</taxon>
        <taxon>Lefavirales</taxon>
        <taxon>Baculoviridae</taxon>
        <taxon>Alphabaculovirus</taxon>
        <taxon>Alphabaculovirus aucalifornicae</taxon>
    </lineage>
</organism>
<keyword id="KW-1185">Reference proteome</keyword>
<keyword id="KW-0946">Virion</keyword>
<comment type="function">
    <text evidence="2 3 4">Structural protein that participates in nucleocapsid assembly. Plays an essential role in the proper localization of the major capsid protein VP39, and the minor capsid protein 38K into the capsid assembly site.</text>
</comment>
<comment type="subunit">
    <text evidence="1 3">Interacts with C42 and VP80. Interacts with protein 38K.</text>
</comment>
<comment type="subcellular location">
    <subcellularLocation>
        <location evidence="2 4">Virion</location>
    </subcellularLocation>
    <text evidence="4">Present in both the budded virus (BV) and the occluded virus (OV). The occluded form allows the virus to be transmitted from insect to insect through ingestion of contaminated food while the budded form is responsible for the dissemination of infection throughout the insect host.</text>
</comment>